<feature type="chain" id="PRO_1000099970" description="Uroporphyrinogen decarboxylase">
    <location>
        <begin position="1"/>
        <end position="354"/>
    </location>
</feature>
<feature type="binding site" evidence="1">
    <location>
        <begin position="27"/>
        <end position="31"/>
    </location>
    <ligand>
        <name>substrate</name>
    </ligand>
</feature>
<feature type="binding site" evidence="1">
    <location>
        <position position="77"/>
    </location>
    <ligand>
        <name>substrate</name>
    </ligand>
</feature>
<feature type="binding site" evidence="1">
    <location>
        <position position="154"/>
    </location>
    <ligand>
        <name>substrate</name>
    </ligand>
</feature>
<feature type="binding site" evidence="1">
    <location>
        <position position="209"/>
    </location>
    <ligand>
        <name>substrate</name>
    </ligand>
</feature>
<feature type="binding site" evidence="1">
    <location>
        <position position="327"/>
    </location>
    <ligand>
        <name>substrate</name>
    </ligand>
</feature>
<feature type="site" description="Transition state stabilizer" evidence="1">
    <location>
        <position position="77"/>
    </location>
</feature>
<dbReference type="EC" id="4.1.1.37" evidence="1"/>
<dbReference type="EMBL" id="CP001091">
    <property type="protein sequence ID" value="ACE60764.1"/>
    <property type="molecule type" value="Genomic_DNA"/>
</dbReference>
<dbReference type="RefSeq" id="WP_005616604.1">
    <property type="nucleotide sequence ID" value="NC_010939.1"/>
</dbReference>
<dbReference type="SMR" id="B3GZV2"/>
<dbReference type="KEGG" id="apa:APP7_0112"/>
<dbReference type="HOGENOM" id="CLU_040933_0_0_6"/>
<dbReference type="UniPathway" id="UPA00251">
    <property type="reaction ID" value="UER00321"/>
</dbReference>
<dbReference type="Proteomes" id="UP000001226">
    <property type="component" value="Chromosome"/>
</dbReference>
<dbReference type="GO" id="GO:0005829">
    <property type="term" value="C:cytosol"/>
    <property type="evidence" value="ECO:0007669"/>
    <property type="project" value="TreeGrafter"/>
</dbReference>
<dbReference type="GO" id="GO:0004853">
    <property type="term" value="F:uroporphyrinogen decarboxylase activity"/>
    <property type="evidence" value="ECO:0007669"/>
    <property type="project" value="UniProtKB-UniRule"/>
</dbReference>
<dbReference type="GO" id="GO:0019353">
    <property type="term" value="P:protoporphyrinogen IX biosynthetic process from glutamate"/>
    <property type="evidence" value="ECO:0007669"/>
    <property type="project" value="TreeGrafter"/>
</dbReference>
<dbReference type="CDD" id="cd00717">
    <property type="entry name" value="URO-D"/>
    <property type="match status" value="1"/>
</dbReference>
<dbReference type="FunFam" id="3.20.20.210:FF:000001">
    <property type="entry name" value="Uroporphyrinogen decarboxylase"/>
    <property type="match status" value="1"/>
</dbReference>
<dbReference type="Gene3D" id="3.20.20.210">
    <property type="match status" value="1"/>
</dbReference>
<dbReference type="HAMAP" id="MF_00218">
    <property type="entry name" value="URO_D"/>
    <property type="match status" value="1"/>
</dbReference>
<dbReference type="InterPro" id="IPR038071">
    <property type="entry name" value="UROD/MetE-like_sf"/>
</dbReference>
<dbReference type="InterPro" id="IPR006361">
    <property type="entry name" value="Uroporphyrinogen_deCO2ase_HemE"/>
</dbReference>
<dbReference type="InterPro" id="IPR000257">
    <property type="entry name" value="Uroporphyrinogen_deCOase"/>
</dbReference>
<dbReference type="NCBIfam" id="TIGR01464">
    <property type="entry name" value="hemE"/>
    <property type="match status" value="1"/>
</dbReference>
<dbReference type="PANTHER" id="PTHR21091">
    <property type="entry name" value="METHYLTETRAHYDROFOLATE:HOMOCYSTEINE METHYLTRANSFERASE RELATED"/>
    <property type="match status" value="1"/>
</dbReference>
<dbReference type="PANTHER" id="PTHR21091:SF169">
    <property type="entry name" value="UROPORPHYRINOGEN DECARBOXYLASE"/>
    <property type="match status" value="1"/>
</dbReference>
<dbReference type="Pfam" id="PF01208">
    <property type="entry name" value="URO-D"/>
    <property type="match status" value="1"/>
</dbReference>
<dbReference type="SUPFAM" id="SSF51726">
    <property type="entry name" value="UROD/MetE-like"/>
    <property type="match status" value="1"/>
</dbReference>
<dbReference type="PROSITE" id="PS00906">
    <property type="entry name" value="UROD_1"/>
    <property type="match status" value="1"/>
</dbReference>
<dbReference type="PROSITE" id="PS00907">
    <property type="entry name" value="UROD_2"/>
    <property type="match status" value="1"/>
</dbReference>
<keyword id="KW-0963">Cytoplasm</keyword>
<keyword id="KW-0210">Decarboxylase</keyword>
<keyword id="KW-0456">Lyase</keyword>
<keyword id="KW-0627">Porphyrin biosynthesis</keyword>
<proteinExistence type="inferred from homology"/>
<evidence type="ECO:0000255" key="1">
    <source>
        <dbReference type="HAMAP-Rule" id="MF_00218"/>
    </source>
</evidence>
<accession>B3GZV2</accession>
<name>DCUP_ACTP7</name>
<reference key="1">
    <citation type="submission" date="2008-06" db="EMBL/GenBank/DDBJ databases">
        <title>Genome and proteome analysis of A. pleuropneumoniae serotype 7.</title>
        <authorList>
            <person name="Linke B."/>
            <person name="Buettner F."/>
            <person name="Martinez-Arias R."/>
            <person name="Goesmann A."/>
            <person name="Baltes N."/>
            <person name="Tegetmeyer H."/>
            <person name="Singh M."/>
            <person name="Gerlach G.F."/>
        </authorList>
    </citation>
    <scope>NUCLEOTIDE SEQUENCE [LARGE SCALE GENOMIC DNA]</scope>
    <source>
        <strain>AP76</strain>
    </source>
</reference>
<protein>
    <recommendedName>
        <fullName evidence="1">Uroporphyrinogen decarboxylase</fullName>
        <shortName evidence="1">UPD</shortName>
        <shortName evidence="1">URO-D</shortName>
        <ecNumber evidence="1">4.1.1.37</ecNumber>
    </recommendedName>
</protein>
<organism>
    <name type="scientific">Actinobacillus pleuropneumoniae serotype 7 (strain AP76)</name>
    <dbReference type="NCBI Taxonomy" id="537457"/>
    <lineage>
        <taxon>Bacteria</taxon>
        <taxon>Pseudomonadati</taxon>
        <taxon>Pseudomonadota</taxon>
        <taxon>Gammaproteobacteria</taxon>
        <taxon>Pasteurellales</taxon>
        <taxon>Pasteurellaceae</taxon>
        <taxon>Actinobacillus</taxon>
    </lineage>
</organism>
<comment type="function">
    <text evidence="1">Catalyzes the decarboxylation of four acetate groups of uroporphyrinogen-III to yield coproporphyrinogen-III.</text>
</comment>
<comment type="catalytic activity">
    <reaction evidence="1">
        <text>uroporphyrinogen III + 4 H(+) = coproporphyrinogen III + 4 CO2</text>
        <dbReference type="Rhea" id="RHEA:19865"/>
        <dbReference type="ChEBI" id="CHEBI:15378"/>
        <dbReference type="ChEBI" id="CHEBI:16526"/>
        <dbReference type="ChEBI" id="CHEBI:57308"/>
        <dbReference type="ChEBI" id="CHEBI:57309"/>
        <dbReference type="EC" id="4.1.1.37"/>
    </reaction>
</comment>
<comment type="pathway">
    <text evidence="1">Porphyrin-containing compound metabolism; protoporphyrin-IX biosynthesis; coproporphyrinogen-III from 5-aminolevulinate: step 4/4.</text>
</comment>
<comment type="subunit">
    <text evidence="1">Homodimer.</text>
</comment>
<comment type="subcellular location">
    <subcellularLocation>
        <location evidence="1">Cytoplasm</location>
    </subcellularLocation>
</comment>
<comment type="similarity">
    <text evidence="1">Belongs to the uroporphyrinogen decarboxylase family.</text>
</comment>
<sequence>MNQLKNDRYLKALLREPVDMTPVWMMRQAGRYLPEYKATRAEAGDFMALCRNADLACEVTLQPLRRYALDAAILFSDILTVPDAMGLGLSFGAGEGPKFARPIENKAQVDNLPIPDPESELQYVMNAVRTIRRELKGEVPLIGFSGSPWTLATYMVEGGSSKAFTKIKKMMYADPKILHALLDKLADSVILYLNAQIKAGAQAVMVFDTWGGVLAHNEYKEFSLRYMHKIVDGLIRENEGRKVPVTLFTKGGGLWLEAIAETGCDAVGLDWTVDIADARRRVGHKVALQGNMDPSVLYAQPERIELEVKQILAGFGQGSGHVFNLGHGIHQDVPEQSPKVFVDAVHEYSKQYHK</sequence>
<gene>
    <name evidence="1" type="primary">hemE</name>
    <name type="ordered locus">APP7_0112</name>
</gene>